<gene>
    <name type="primary">lecA</name>
    <name type="synonym">pa1L</name>
    <name type="ordered locus">PA2570</name>
</gene>
<proteinExistence type="evidence at protein level"/>
<evidence type="ECO:0000269" key="1">
    <source>
    </source>
</evidence>
<evidence type="ECO:0000305" key="2"/>
<evidence type="ECO:0007829" key="3">
    <source>
        <dbReference type="PDB" id="4YWA"/>
    </source>
</evidence>
<evidence type="ECO:0007829" key="4">
    <source>
        <dbReference type="PDB" id="8GUV"/>
    </source>
</evidence>
<name>PA1L_PSEAE</name>
<dbReference type="EMBL" id="X65933">
    <property type="protein sequence ID" value="CAA46728.1"/>
    <property type="molecule type" value="Genomic_DNA"/>
</dbReference>
<dbReference type="EMBL" id="AF229814">
    <property type="protein sequence ID" value="AAF70459.1"/>
    <property type="molecule type" value="Genomic_DNA"/>
</dbReference>
<dbReference type="EMBL" id="AE004091">
    <property type="protein sequence ID" value="AAG05958.1"/>
    <property type="molecule type" value="Genomic_DNA"/>
</dbReference>
<dbReference type="PIR" id="S45300">
    <property type="entry name" value="S45300"/>
</dbReference>
<dbReference type="RefSeq" id="NP_251260.1">
    <property type="nucleotide sequence ID" value="NC_002516.2"/>
</dbReference>
<dbReference type="RefSeq" id="WP_003102492.1">
    <property type="nucleotide sequence ID" value="NZ_QZGE01000008.1"/>
</dbReference>
<dbReference type="PDB" id="1L7L">
    <property type="method" value="X-ray"/>
    <property type="resolution" value="1.50 A"/>
    <property type="chains" value="A=2-122"/>
</dbReference>
<dbReference type="PDB" id="1OKO">
    <property type="method" value="X-ray"/>
    <property type="resolution" value="1.60 A"/>
    <property type="chains" value="A/B/C/D=2-122"/>
</dbReference>
<dbReference type="PDB" id="1UOJ">
    <property type="method" value="X-ray"/>
    <property type="resolution" value="2.40 A"/>
    <property type="chains" value="A/B/C/D=2-122"/>
</dbReference>
<dbReference type="PDB" id="2VXJ">
    <property type="method" value="X-ray"/>
    <property type="resolution" value="1.90 A"/>
    <property type="chains" value="A/B/C/D/E/F/G/H/I/J/K/L/M/N/O/P/Q/R/S/T/U/V/W/X=2-122"/>
</dbReference>
<dbReference type="PDB" id="2WYF">
    <property type="method" value="X-ray"/>
    <property type="resolution" value="2.40 A"/>
    <property type="chains" value="A/B/C/D/E/F/G/H=2-122"/>
</dbReference>
<dbReference type="PDB" id="3ZYB">
    <property type="method" value="X-ray"/>
    <property type="resolution" value="2.29 A"/>
    <property type="chains" value="A/B/C/D/E/F/G/H=1-122"/>
</dbReference>
<dbReference type="PDB" id="3ZYF">
    <property type="method" value="X-ray"/>
    <property type="resolution" value="1.94 A"/>
    <property type="chains" value="A/B/C/D=1-122"/>
</dbReference>
<dbReference type="PDB" id="3ZYH">
    <property type="method" value="X-ray"/>
    <property type="resolution" value="1.50 A"/>
    <property type="chains" value="A/B=1-122"/>
</dbReference>
<dbReference type="PDB" id="4A6S">
    <property type="method" value="X-ray"/>
    <property type="resolution" value="2.15 A"/>
    <property type="chains" value="A/B/C/D=2-122"/>
</dbReference>
<dbReference type="PDB" id="4AL9">
    <property type="method" value="X-ray"/>
    <property type="resolution" value="1.75 A"/>
    <property type="chains" value="A/B/C/D/E/F/G/H=2-122"/>
</dbReference>
<dbReference type="PDB" id="4CP9">
    <property type="method" value="X-ray"/>
    <property type="resolution" value="1.65 A"/>
    <property type="chains" value="A/B/C/D=2-122"/>
</dbReference>
<dbReference type="PDB" id="4CPB">
    <property type="method" value="X-ray"/>
    <property type="resolution" value="1.57 A"/>
    <property type="chains" value="A/B/C/D=2-122"/>
</dbReference>
<dbReference type="PDB" id="4LJH">
    <property type="method" value="X-ray"/>
    <property type="resolution" value="1.45 A"/>
    <property type="chains" value="A/B/C/D=1-122"/>
</dbReference>
<dbReference type="PDB" id="4LK6">
    <property type="method" value="X-ray"/>
    <property type="resolution" value="2.86 A"/>
    <property type="chains" value="A/B/C/D/E/F/G/H/I/J/K/L=2-122"/>
</dbReference>
<dbReference type="PDB" id="4LK7">
    <property type="method" value="X-ray"/>
    <property type="resolution" value="1.76 A"/>
    <property type="chains" value="A/B/C/D=2-122"/>
</dbReference>
<dbReference type="PDB" id="4LKD">
    <property type="method" value="X-ray"/>
    <property type="resolution" value="2.31 A"/>
    <property type="chains" value="A/B/C/D/E/F/G/H=2-122"/>
</dbReference>
<dbReference type="PDB" id="4LKE">
    <property type="method" value="X-ray"/>
    <property type="resolution" value="1.65 A"/>
    <property type="chains" value="A/B/C/D=2-122"/>
</dbReference>
<dbReference type="PDB" id="4LKF">
    <property type="method" value="X-ray"/>
    <property type="resolution" value="1.64 A"/>
    <property type="chains" value="A/B=2-122"/>
</dbReference>
<dbReference type="PDB" id="4YW6">
    <property type="method" value="X-ray"/>
    <property type="resolution" value="1.40 A"/>
    <property type="chains" value="A/B/C/D=2-122"/>
</dbReference>
<dbReference type="PDB" id="4YW7">
    <property type="method" value="X-ray"/>
    <property type="resolution" value="1.82 A"/>
    <property type="chains" value="A/B/C/D/E/F/G/H/I/J/K/L/M/N/O/P=2-122"/>
</dbReference>
<dbReference type="PDB" id="4YWA">
    <property type="method" value="X-ray"/>
    <property type="resolution" value="1.19 A"/>
    <property type="chains" value="A/B/C/D=2-122"/>
</dbReference>
<dbReference type="PDB" id="5D21">
    <property type="method" value="X-ray"/>
    <property type="resolution" value="1.90 A"/>
    <property type="chains" value="A/B/C/D=2-122"/>
</dbReference>
<dbReference type="PDB" id="5MIH">
    <property type="method" value="X-ray"/>
    <property type="resolution" value="1.80 A"/>
    <property type="chains" value="A/B/C/D=2-122"/>
</dbReference>
<dbReference type="PDB" id="6YO3">
    <property type="method" value="X-ray"/>
    <property type="resolution" value="1.84 A"/>
    <property type="chains" value="A/B/C/D=2-122"/>
</dbReference>
<dbReference type="PDB" id="6YOH">
    <property type="method" value="X-ray"/>
    <property type="resolution" value="1.84 A"/>
    <property type="chains" value="A/B/C/D=2-122"/>
</dbReference>
<dbReference type="PDB" id="7FIO">
    <property type="method" value="X-ray"/>
    <property type="resolution" value="1.50 A"/>
    <property type="chains" value="A/B/C/D=2-122"/>
</dbReference>
<dbReference type="PDB" id="7FJH">
    <property type="method" value="X-ray"/>
    <property type="resolution" value="1.79 A"/>
    <property type="chains" value="A/B/C/D=2-122"/>
</dbReference>
<dbReference type="PDB" id="7Z62">
    <property type="method" value="X-ray"/>
    <property type="resolution" value="1.53 A"/>
    <property type="chains" value="AAA/BBB=2-122"/>
</dbReference>
<dbReference type="PDB" id="7Z63">
    <property type="method" value="X-ray"/>
    <property type="resolution" value="1.75 A"/>
    <property type="chains" value="AAA/BBB/CCC/DDD=2-122"/>
</dbReference>
<dbReference type="PDB" id="8GUV">
    <property type="method" value="X-ray"/>
    <property type="resolution" value="1.32 A"/>
    <property type="chains" value="A/B=2-122"/>
</dbReference>
<dbReference type="PDB" id="9G3R">
    <property type="method" value="X-ray"/>
    <property type="resolution" value="1.70 A"/>
    <property type="chains" value="A/B/C/D/E/F/G/H=2-122"/>
</dbReference>
<dbReference type="PDBsum" id="1L7L"/>
<dbReference type="PDBsum" id="1OKO"/>
<dbReference type="PDBsum" id="1UOJ"/>
<dbReference type="PDBsum" id="2VXJ"/>
<dbReference type="PDBsum" id="2WYF"/>
<dbReference type="PDBsum" id="3ZYB"/>
<dbReference type="PDBsum" id="3ZYF"/>
<dbReference type="PDBsum" id="3ZYH"/>
<dbReference type="PDBsum" id="4A6S"/>
<dbReference type="PDBsum" id="4AL9"/>
<dbReference type="PDBsum" id="4CP9"/>
<dbReference type="PDBsum" id="4CPB"/>
<dbReference type="PDBsum" id="4LJH"/>
<dbReference type="PDBsum" id="4LK6"/>
<dbReference type="PDBsum" id="4LK7"/>
<dbReference type="PDBsum" id="4LKD"/>
<dbReference type="PDBsum" id="4LKE"/>
<dbReference type="PDBsum" id="4LKF"/>
<dbReference type="PDBsum" id="4YW6"/>
<dbReference type="PDBsum" id="4YW7"/>
<dbReference type="PDBsum" id="4YWA"/>
<dbReference type="PDBsum" id="5D21"/>
<dbReference type="PDBsum" id="5MIH"/>
<dbReference type="PDBsum" id="6YO3"/>
<dbReference type="PDBsum" id="6YOH"/>
<dbReference type="PDBsum" id="7FIO"/>
<dbReference type="PDBsum" id="7FJH"/>
<dbReference type="PDBsum" id="7Z62"/>
<dbReference type="PDBsum" id="7Z63"/>
<dbReference type="PDBsum" id="8GUV"/>
<dbReference type="PDBsum" id="9G3R"/>
<dbReference type="SMR" id="Q05097"/>
<dbReference type="STRING" id="208964.PA2570"/>
<dbReference type="BindingDB" id="Q05097"/>
<dbReference type="ChEMBL" id="CHEMBL3351196"/>
<dbReference type="UniLectin" id="Q05097"/>
<dbReference type="PaxDb" id="208964-PA2570"/>
<dbReference type="GeneID" id="882335"/>
<dbReference type="KEGG" id="pae:PA2570"/>
<dbReference type="PseudoCAP" id="PA2570"/>
<dbReference type="HOGENOM" id="CLU_162760_0_0_6"/>
<dbReference type="InParanoid" id="Q05097"/>
<dbReference type="OrthoDB" id="6444532at2"/>
<dbReference type="BioCyc" id="PAER208964:G1FZ6-2606-MONOMER"/>
<dbReference type="EvolutionaryTrace" id="Q05097"/>
<dbReference type="PRO" id="PR:Q05097"/>
<dbReference type="Proteomes" id="UP000002438">
    <property type="component" value="Chromosome"/>
</dbReference>
<dbReference type="GO" id="GO:0009986">
    <property type="term" value="C:cell surface"/>
    <property type="evidence" value="ECO:0007669"/>
    <property type="project" value="UniProtKB-SubCell"/>
</dbReference>
<dbReference type="GO" id="GO:0005737">
    <property type="term" value="C:cytoplasm"/>
    <property type="evidence" value="ECO:0007669"/>
    <property type="project" value="UniProtKB-SubCell"/>
</dbReference>
<dbReference type="GO" id="GO:0042597">
    <property type="term" value="C:periplasmic space"/>
    <property type="evidence" value="ECO:0007669"/>
    <property type="project" value="UniProtKB-SubCell"/>
</dbReference>
<dbReference type="GO" id="GO:0030246">
    <property type="term" value="F:carbohydrate binding"/>
    <property type="evidence" value="ECO:0007669"/>
    <property type="project" value="UniProtKB-KW"/>
</dbReference>
<dbReference type="GO" id="GO:0007157">
    <property type="term" value="P:heterophilic cell-cell adhesion via plasma membrane cell adhesion molecules"/>
    <property type="evidence" value="ECO:0000314"/>
    <property type="project" value="PseudoCAP"/>
</dbReference>
<dbReference type="Gene3D" id="2.60.120.430">
    <property type="entry name" value="Galactose-binding lectin"/>
    <property type="match status" value="1"/>
</dbReference>
<dbReference type="InterPro" id="IPR008979">
    <property type="entry name" value="Galactose-bd-like_sf"/>
</dbReference>
<dbReference type="InterPro" id="IPR012905">
    <property type="entry name" value="PA-IL"/>
</dbReference>
<dbReference type="Pfam" id="PF07828">
    <property type="entry name" value="PA-IL"/>
    <property type="match status" value="1"/>
</dbReference>
<dbReference type="PIRSF" id="PIRSF020485">
    <property type="entry name" value="PA-IL"/>
    <property type="match status" value="1"/>
</dbReference>
<dbReference type="SUPFAM" id="SSF49785">
    <property type="entry name" value="Galactose-binding domain-like"/>
    <property type="match status" value="1"/>
</dbReference>
<reference key="1">
    <citation type="journal article" date="1992" name="J. Biol. Chem.">
        <title>Analysis of the amino acid sequence of the Pseudomonas aeruginosa galactophilic PA-I lectin.</title>
        <authorList>
            <person name="Avichezer D."/>
            <person name="Katcoff D.J."/>
            <person name="Garber N.C."/>
            <person name="Gilboa-Garber N."/>
        </authorList>
    </citation>
    <scope>NUCLEOTIDE SEQUENCE [GENOMIC DNA]</scope>
    <scope>PROTEIN SEQUENCE OF 2-31</scope>
    <source>
        <strain>ATCC 33347</strain>
    </source>
</reference>
<reference key="2">
    <citation type="journal article" date="1994" name="Biochim. Biophys. Acta">
        <title>Pseudomonas aeruginosa PA-I lectin gene molecular analysis and expression in Escherichia coli.</title>
        <authorList>
            <person name="Avichezer D."/>
            <person name="Gilboa-Garber N."/>
            <person name="Garber N.C."/>
            <person name="Katcoff D.J."/>
        </authorList>
    </citation>
    <scope>SEQUENCE REVISION</scope>
</reference>
<reference key="3">
    <citation type="submission" date="2000-01" db="EMBL/GenBank/DDBJ databases">
        <title>The Pseudomonas aeruginosa lectins PA-1L and PA-2L are controlled by quorum sensing and by RpoS.</title>
        <authorList>
            <person name="Winzer K."/>
            <person name="Falconer C."/>
            <person name="Diggle S.P."/>
            <person name="Garber N.C."/>
            <person name="Camara M."/>
            <person name="Williams P."/>
        </authorList>
    </citation>
    <scope>NUCLEOTIDE SEQUENCE [GENOMIC DNA]</scope>
</reference>
<reference key="4">
    <citation type="journal article" date="2000" name="Nature">
        <title>Complete genome sequence of Pseudomonas aeruginosa PAO1, an opportunistic pathogen.</title>
        <authorList>
            <person name="Stover C.K."/>
            <person name="Pham X.-Q.T."/>
            <person name="Erwin A.L."/>
            <person name="Mizoguchi S.D."/>
            <person name="Warrener P."/>
            <person name="Hickey M.J."/>
            <person name="Brinkman F.S.L."/>
            <person name="Hufnagle W.O."/>
            <person name="Kowalik D.J."/>
            <person name="Lagrou M."/>
            <person name="Garber R.L."/>
            <person name="Goltry L."/>
            <person name="Tolentino E."/>
            <person name="Westbrock-Wadman S."/>
            <person name="Yuan Y."/>
            <person name="Brody L.L."/>
            <person name="Coulter S.N."/>
            <person name="Folger K.R."/>
            <person name="Kas A."/>
            <person name="Larbig K."/>
            <person name="Lim R.M."/>
            <person name="Smith K.A."/>
            <person name="Spencer D.H."/>
            <person name="Wong G.K.-S."/>
            <person name="Wu Z."/>
            <person name="Paulsen I.T."/>
            <person name="Reizer J."/>
            <person name="Saier M.H. Jr."/>
            <person name="Hancock R.E.W."/>
            <person name="Lory S."/>
            <person name="Olson M.V."/>
        </authorList>
    </citation>
    <scope>NUCLEOTIDE SEQUENCE [LARGE SCALE GENOMIC DNA]</scope>
    <source>
        <strain>ATCC 15692 / DSM 22644 / CIP 104116 / JCM 14847 / LMG 12228 / 1C / PRS 101 / PAO1</strain>
    </source>
</reference>
<feature type="initiator methionine" description="Removed" evidence="1">
    <location>
        <position position="1"/>
    </location>
</feature>
<feature type="chain" id="PRO_0000058158" description="PA-I galactophilic lectin">
    <location>
        <begin position="2"/>
        <end position="122"/>
    </location>
</feature>
<feature type="strand" evidence="3">
    <location>
        <begin position="3"/>
        <end position="8"/>
    </location>
</feature>
<feature type="strand" evidence="3">
    <location>
        <begin position="15"/>
        <end position="21"/>
    </location>
</feature>
<feature type="strand" evidence="3">
    <location>
        <begin position="27"/>
        <end position="41"/>
    </location>
</feature>
<feature type="strand" evidence="4">
    <location>
        <begin position="46"/>
        <end position="48"/>
    </location>
</feature>
<feature type="strand" evidence="3">
    <location>
        <begin position="65"/>
        <end position="70"/>
    </location>
</feature>
<feature type="strand" evidence="3">
    <location>
        <begin position="81"/>
        <end position="85"/>
    </location>
</feature>
<feature type="strand" evidence="3">
    <location>
        <begin position="93"/>
        <end position="99"/>
    </location>
</feature>
<feature type="helix" evidence="3">
    <location>
        <begin position="106"/>
        <end position="108"/>
    </location>
</feature>
<feature type="strand" evidence="3">
    <location>
        <begin position="110"/>
        <end position="119"/>
    </location>
</feature>
<sequence>MAWKGEVLANNEAGQVTSIIYNPGDVITIVAAGWASYGPTQKWGPQGDREHPDQGLICHDAFCGALVMKIGNSGTIPVNTGLFRWVAPNNVQGAITLIYNDVPGTYGNNSGSFSVNIGKDQS</sequence>
<organism>
    <name type="scientific">Pseudomonas aeruginosa (strain ATCC 15692 / DSM 22644 / CIP 104116 / JCM 14847 / LMG 12228 / 1C / PRS 101 / PAO1)</name>
    <dbReference type="NCBI Taxonomy" id="208964"/>
    <lineage>
        <taxon>Bacteria</taxon>
        <taxon>Pseudomonadati</taxon>
        <taxon>Pseudomonadota</taxon>
        <taxon>Gammaproteobacteria</taxon>
        <taxon>Pseudomonadales</taxon>
        <taxon>Pseudomonadaceae</taxon>
        <taxon>Pseudomonas</taxon>
    </lineage>
</organism>
<keyword id="KW-0002">3D-structure</keyword>
<keyword id="KW-0963">Cytoplasm</keyword>
<keyword id="KW-0903">Direct protein sequencing</keyword>
<keyword id="KW-0430">Lectin</keyword>
<keyword id="KW-0574">Periplasm</keyword>
<keyword id="KW-1185">Reference proteome</keyword>
<protein>
    <recommendedName>
        <fullName>PA-I galactophilic lectin</fullName>
        <shortName>PA-IL</shortName>
    </recommendedName>
    <alternativeName>
        <fullName>Galactose-binding lectin</fullName>
    </alternativeName>
</protein>
<comment type="function">
    <text>D-galactose specific lectin. Binds in decreasing order of affinity: melibiose, methyl-alpha-D-galactoside, D-galactose, methyl-beta-D-galactoside, N-acetyl-D-galactosamine. Similar to plant lectins in its selective (carbohydrate-specific) hemagglutinating activity.</text>
</comment>
<comment type="subcellular location">
    <subcellularLocation>
        <location>Cytoplasm</location>
    </subcellularLocation>
    <subcellularLocation>
        <location>Periplasm</location>
    </subcellularLocation>
    <subcellularLocation>
        <location>Cell surface</location>
    </subcellularLocation>
    <text>Low exposure on the cell surface.</text>
</comment>
<comment type="similarity">
    <text evidence="2">Belongs to the LecA/PllA lectin family.</text>
</comment>
<accession>Q05097</accession>